<organism>
    <name type="scientific">Borrelia garinii subsp. bavariensis (strain ATCC BAA-2496 / DSM 23469 / PBi)</name>
    <name type="common">Borreliella bavariensis</name>
    <dbReference type="NCBI Taxonomy" id="290434"/>
    <lineage>
        <taxon>Bacteria</taxon>
        <taxon>Pseudomonadati</taxon>
        <taxon>Spirochaetota</taxon>
        <taxon>Spirochaetia</taxon>
        <taxon>Spirochaetales</taxon>
        <taxon>Borreliaceae</taxon>
        <taxon>Borreliella</taxon>
    </lineage>
</organism>
<proteinExistence type="inferred from homology"/>
<protein>
    <recommendedName>
        <fullName evidence="1">V-type ATP synthase alpha chain</fullName>
        <ecNumber evidence="1">7.1.2.2</ecNumber>
    </recommendedName>
    <alternativeName>
        <fullName evidence="1">V-ATPase subunit A</fullName>
    </alternativeName>
</protein>
<sequence>MKTKGKVVGVNGNLVTIEVEGSVSMNEVLFIKTAGRNLKAEIIRVRGNEVDAQVFELTKGISVGDVVEFTDKLLTVELGPGLLTQVYDGLQNPLPELAIQCGFFLERGVYLRPLNKDKKWNFKKTAKVGDSVIAGDFLGFVIEGTVHHQIMIPFYKRDSYKIVEIVNDGNYSIDEQIAVIEDDSGMKHSITMSFHWPVKIPITNYKERLIPSEPMLTQTRIIDTFFPVAKGGTFCIPGPFGAGKTVLQQVTSRNADVDIVIIAACGERAGEVVETLKEFPELIDPKTGKSLMDRTCIICNTSSMPVAAREASVYTAITIGEYYRQMGLDILLLADSTSRWAQAMREMSGRLEEIPGEEAFPAYLESVIASFYERAGIVVLNNGDIGSVTVGGSVSPAGGNFEEPVTQATLKVVGAFHGLTRERSDARKFPAISPLESWSKYKGVIDSKKAEYARSFLVKGNEINQMMKVVGEEGISSEDFLIYLKSELLDSCYLQQNSFDSVDAAVSSERQNYMFDIVYNILKTNFEFSDKLQARDFMNELRQNLLDMNLSSFKDYKFNKLEQALSELVNLKKVI</sequence>
<accession>Q662R8</accession>
<keyword id="KW-0066">ATP synthesis</keyword>
<keyword id="KW-0067">ATP-binding</keyword>
<keyword id="KW-0375">Hydrogen ion transport</keyword>
<keyword id="KW-0406">Ion transport</keyword>
<keyword id="KW-0547">Nucleotide-binding</keyword>
<keyword id="KW-1278">Translocase</keyword>
<keyword id="KW-0813">Transport</keyword>
<name>VATA_BORGP</name>
<dbReference type="EC" id="7.1.2.2" evidence="1"/>
<dbReference type="EMBL" id="CP000013">
    <property type="protein sequence ID" value="AAU06953.1"/>
    <property type="molecule type" value="Genomic_DNA"/>
</dbReference>
<dbReference type="RefSeq" id="WP_011193447.1">
    <property type="nucleotide sequence ID" value="NZ_CP028872.1"/>
</dbReference>
<dbReference type="SMR" id="Q662R8"/>
<dbReference type="GeneID" id="45160890"/>
<dbReference type="KEGG" id="bga:BG0095"/>
<dbReference type="eggNOG" id="COG1155">
    <property type="taxonomic scope" value="Bacteria"/>
</dbReference>
<dbReference type="HOGENOM" id="CLU_008162_1_1_12"/>
<dbReference type="OrthoDB" id="9803053at2"/>
<dbReference type="Proteomes" id="UP000002276">
    <property type="component" value="Chromosome"/>
</dbReference>
<dbReference type="GO" id="GO:0045259">
    <property type="term" value="C:proton-transporting ATP synthase complex"/>
    <property type="evidence" value="ECO:0007669"/>
    <property type="project" value="UniProtKB-ARBA"/>
</dbReference>
<dbReference type="GO" id="GO:0005524">
    <property type="term" value="F:ATP binding"/>
    <property type="evidence" value="ECO:0007669"/>
    <property type="project" value="UniProtKB-UniRule"/>
</dbReference>
<dbReference type="GO" id="GO:0046933">
    <property type="term" value="F:proton-transporting ATP synthase activity, rotational mechanism"/>
    <property type="evidence" value="ECO:0007669"/>
    <property type="project" value="UniProtKB-UniRule"/>
</dbReference>
<dbReference type="GO" id="GO:0046961">
    <property type="term" value="F:proton-transporting ATPase activity, rotational mechanism"/>
    <property type="evidence" value="ECO:0007669"/>
    <property type="project" value="InterPro"/>
</dbReference>
<dbReference type="GO" id="GO:0042777">
    <property type="term" value="P:proton motive force-driven plasma membrane ATP synthesis"/>
    <property type="evidence" value="ECO:0007669"/>
    <property type="project" value="UniProtKB-UniRule"/>
</dbReference>
<dbReference type="CDD" id="cd01426">
    <property type="entry name" value="ATP-synt_F1_V1_A1_AB_FliI_N"/>
    <property type="match status" value="1"/>
</dbReference>
<dbReference type="CDD" id="cd18111">
    <property type="entry name" value="ATP-synt_V_A-type_alpha_C"/>
    <property type="match status" value="1"/>
</dbReference>
<dbReference type="CDD" id="cd01134">
    <property type="entry name" value="V_A-ATPase_A"/>
    <property type="match status" value="1"/>
</dbReference>
<dbReference type="Gene3D" id="2.40.30.20">
    <property type="match status" value="1"/>
</dbReference>
<dbReference type="Gene3D" id="2.40.50.100">
    <property type="match status" value="1"/>
</dbReference>
<dbReference type="Gene3D" id="1.10.1140.10">
    <property type="entry name" value="Bovine Mitochondrial F1-atpase, Atp Synthase Beta Chain, Chain D, domain 3"/>
    <property type="match status" value="1"/>
</dbReference>
<dbReference type="Gene3D" id="3.40.50.300">
    <property type="entry name" value="P-loop containing nucleotide triphosphate hydrolases"/>
    <property type="match status" value="1"/>
</dbReference>
<dbReference type="HAMAP" id="MF_00309">
    <property type="entry name" value="ATP_synth_A_arch"/>
    <property type="match status" value="1"/>
</dbReference>
<dbReference type="InterPro" id="IPR055190">
    <property type="entry name" value="ATP-synt_VA_C"/>
</dbReference>
<dbReference type="InterPro" id="IPR031686">
    <property type="entry name" value="ATP-synth_a_Xtn"/>
</dbReference>
<dbReference type="InterPro" id="IPR023366">
    <property type="entry name" value="ATP_synth_asu-like_sf"/>
</dbReference>
<dbReference type="InterPro" id="IPR004100">
    <property type="entry name" value="ATPase_F1/V1/A1_a/bsu_N"/>
</dbReference>
<dbReference type="InterPro" id="IPR036121">
    <property type="entry name" value="ATPase_F1/V1/A1_a/bsu_N_sf"/>
</dbReference>
<dbReference type="InterPro" id="IPR000194">
    <property type="entry name" value="ATPase_F1/V1/A1_a/bsu_nucl-bd"/>
</dbReference>
<dbReference type="InterPro" id="IPR024034">
    <property type="entry name" value="ATPase_F1/V1_b/a_C"/>
</dbReference>
<dbReference type="InterPro" id="IPR027417">
    <property type="entry name" value="P-loop_NTPase"/>
</dbReference>
<dbReference type="InterPro" id="IPR022878">
    <property type="entry name" value="V-ATPase_asu"/>
</dbReference>
<dbReference type="NCBIfam" id="NF003220">
    <property type="entry name" value="PRK04192.1"/>
    <property type="match status" value="1"/>
</dbReference>
<dbReference type="PANTHER" id="PTHR43607:SF1">
    <property type="entry name" value="H(+)-TRANSPORTING TWO-SECTOR ATPASE"/>
    <property type="match status" value="1"/>
</dbReference>
<dbReference type="PANTHER" id="PTHR43607">
    <property type="entry name" value="V-TYPE PROTON ATPASE CATALYTIC SUBUNIT A"/>
    <property type="match status" value="1"/>
</dbReference>
<dbReference type="Pfam" id="PF00006">
    <property type="entry name" value="ATP-synt_ab"/>
    <property type="match status" value="1"/>
</dbReference>
<dbReference type="Pfam" id="PF02874">
    <property type="entry name" value="ATP-synt_ab_N"/>
    <property type="match status" value="1"/>
</dbReference>
<dbReference type="Pfam" id="PF16886">
    <property type="entry name" value="ATP-synt_ab_Xtn"/>
    <property type="match status" value="1"/>
</dbReference>
<dbReference type="Pfam" id="PF22919">
    <property type="entry name" value="ATP-synt_VA_C"/>
    <property type="match status" value="1"/>
</dbReference>
<dbReference type="SUPFAM" id="SSF47917">
    <property type="entry name" value="C-terminal domain of alpha and beta subunits of F1 ATP synthase"/>
    <property type="match status" value="1"/>
</dbReference>
<dbReference type="SUPFAM" id="SSF50615">
    <property type="entry name" value="N-terminal domain of alpha and beta subunits of F1 ATP synthase"/>
    <property type="match status" value="1"/>
</dbReference>
<dbReference type="SUPFAM" id="SSF52540">
    <property type="entry name" value="P-loop containing nucleoside triphosphate hydrolases"/>
    <property type="match status" value="1"/>
</dbReference>
<gene>
    <name evidence="1" type="primary">atpA</name>
    <name type="ordered locus">BG0095</name>
</gene>
<evidence type="ECO:0000255" key="1">
    <source>
        <dbReference type="HAMAP-Rule" id="MF_00309"/>
    </source>
</evidence>
<comment type="function">
    <text evidence="1">Produces ATP from ADP in the presence of a proton gradient across the membrane. The V-type alpha chain is a catalytic subunit.</text>
</comment>
<comment type="catalytic activity">
    <reaction evidence="1">
        <text>ATP + H2O + 4 H(+)(in) = ADP + phosphate + 5 H(+)(out)</text>
        <dbReference type="Rhea" id="RHEA:57720"/>
        <dbReference type="ChEBI" id="CHEBI:15377"/>
        <dbReference type="ChEBI" id="CHEBI:15378"/>
        <dbReference type="ChEBI" id="CHEBI:30616"/>
        <dbReference type="ChEBI" id="CHEBI:43474"/>
        <dbReference type="ChEBI" id="CHEBI:456216"/>
        <dbReference type="EC" id="7.1.2.2"/>
    </reaction>
</comment>
<comment type="similarity">
    <text evidence="1">Belongs to the ATPase alpha/beta chains family.</text>
</comment>
<feature type="chain" id="PRO_1000059333" description="V-type ATP synthase alpha chain">
    <location>
        <begin position="1"/>
        <end position="575"/>
    </location>
</feature>
<feature type="binding site" evidence="1">
    <location>
        <begin position="238"/>
        <end position="245"/>
    </location>
    <ligand>
        <name>ATP</name>
        <dbReference type="ChEBI" id="CHEBI:30616"/>
    </ligand>
</feature>
<reference key="1">
    <citation type="journal article" date="2004" name="Nucleic Acids Res.">
        <title>Comparative analysis of the Borrelia garinii genome.</title>
        <authorList>
            <person name="Gloeckner G."/>
            <person name="Lehmann R."/>
            <person name="Romualdi A."/>
            <person name="Pradella S."/>
            <person name="Schulte-Spechtel U."/>
            <person name="Schilhabel M."/>
            <person name="Wilske B."/>
            <person name="Suehnel J."/>
            <person name="Platzer M."/>
        </authorList>
    </citation>
    <scope>NUCLEOTIDE SEQUENCE [LARGE SCALE GENOMIC DNA]</scope>
    <source>
        <strain>ATCC BAA-2496 / DSM 23469 / PBi</strain>
    </source>
</reference>